<feature type="chain" id="PRO_0000089975" description="Biogenesis of lysosome-related organelles complex 1 subunit 4">
    <location>
        <begin position="1"/>
        <end position="217"/>
    </location>
</feature>
<feature type="region of interest" description="Disordered" evidence="3">
    <location>
        <begin position="1"/>
        <end position="57"/>
    </location>
</feature>
<feature type="coiled-coil region" evidence="2">
    <location>
        <begin position="136"/>
        <end position="165"/>
    </location>
</feature>
<feature type="compositionally biased region" description="Polar residues" evidence="3">
    <location>
        <begin position="29"/>
        <end position="41"/>
    </location>
</feature>
<feature type="modified residue" description="Phosphothreonine" evidence="7">
    <location>
        <position position="165"/>
    </location>
</feature>
<feature type="sequence conflict" description="In Ref. 2; AAH67815." evidence="6" ref="2">
    <original>L</original>
    <variation>H</variation>
    <location>
        <position position="61"/>
    </location>
</feature>
<name>BL1S4_HUMAN</name>
<comment type="function">
    <text evidence="4">Component of the BLOC-1 complex, a complex that is required for normal biogenesis of lysosome-related organelles (LRO), such as platelet dense granules and melanosomes. In concert with the AP-3 complex, the BLOC-1 complex is required to target membrane protein cargos into vesicles assembled at cell bodies for delivery into neurites and nerve terminals. The BLOC-1 complex, in association with SNARE proteins, is also proposed to be involved in neurite extension. Plays a role in intracellular vesicle trafficking.</text>
</comment>
<comment type="subunit">
    <text evidence="1 5">Interacts with BLOC1S5 and BLOC1S6 (By similarity). Component of the biogenesis of lysosome-related organelles complex 1 (BLOC-1) composed of BLOC1S1, BLOC1S2, BLOC1S3, BLOC1S4, BLOC1S5, BLOC1S6, DTNBP1/BLOC1S7 and SNAPIN/BLOC1S8. Octamer composed of one copy each BLOC1S1, BLOC1S2, BLOC1S3, BLOC1S4, BLOC1S5, BLOC1S6, DTNBP1/BLOC1S7 and SNAPIN/BLOC1S8. The BLOC-1 complex associates with the AP-3 protein complex and membrane protein cargos.</text>
</comment>
<comment type="interaction">
    <interactant intactId="EBI-465852">
        <id>Q9NUP1</id>
    </interactant>
    <interactant intactId="EBI-465781">
        <id>Q9UL45</id>
        <label>BLOC1S6</label>
    </interactant>
    <organismsDiffer>false</organismsDiffer>
    <experiments>8</experiments>
</comment>
<comment type="subcellular location">
    <subcellularLocation>
        <location evidence="1">Cytoplasm</location>
    </subcellularLocation>
</comment>
<comment type="similarity">
    <text evidence="6">Belongs to the BLOC1S4 family.</text>
</comment>
<reference key="1">
    <citation type="journal article" date="2004" name="Nat. Genet.">
        <title>Complete sequencing and characterization of 21,243 full-length human cDNAs.</title>
        <authorList>
            <person name="Ota T."/>
            <person name="Suzuki Y."/>
            <person name="Nishikawa T."/>
            <person name="Otsuki T."/>
            <person name="Sugiyama T."/>
            <person name="Irie R."/>
            <person name="Wakamatsu A."/>
            <person name="Hayashi K."/>
            <person name="Sato H."/>
            <person name="Nagai K."/>
            <person name="Kimura K."/>
            <person name="Makita H."/>
            <person name="Sekine M."/>
            <person name="Obayashi M."/>
            <person name="Nishi T."/>
            <person name="Shibahara T."/>
            <person name="Tanaka T."/>
            <person name="Ishii S."/>
            <person name="Yamamoto J."/>
            <person name="Saito K."/>
            <person name="Kawai Y."/>
            <person name="Isono Y."/>
            <person name="Nakamura Y."/>
            <person name="Nagahari K."/>
            <person name="Murakami K."/>
            <person name="Yasuda T."/>
            <person name="Iwayanagi T."/>
            <person name="Wagatsuma M."/>
            <person name="Shiratori A."/>
            <person name="Sudo H."/>
            <person name="Hosoiri T."/>
            <person name="Kaku Y."/>
            <person name="Kodaira H."/>
            <person name="Kondo H."/>
            <person name="Sugawara M."/>
            <person name="Takahashi M."/>
            <person name="Kanda K."/>
            <person name="Yokoi T."/>
            <person name="Furuya T."/>
            <person name="Kikkawa E."/>
            <person name="Omura Y."/>
            <person name="Abe K."/>
            <person name="Kamihara K."/>
            <person name="Katsuta N."/>
            <person name="Sato K."/>
            <person name="Tanikawa M."/>
            <person name="Yamazaki M."/>
            <person name="Ninomiya K."/>
            <person name="Ishibashi T."/>
            <person name="Yamashita H."/>
            <person name="Murakawa K."/>
            <person name="Fujimori K."/>
            <person name="Tanai H."/>
            <person name="Kimata M."/>
            <person name="Watanabe M."/>
            <person name="Hiraoka S."/>
            <person name="Chiba Y."/>
            <person name="Ishida S."/>
            <person name="Ono Y."/>
            <person name="Takiguchi S."/>
            <person name="Watanabe S."/>
            <person name="Yosida M."/>
            <person name="Hotuta T."/>
            <person name="Kusano J."/>
            <person name="Kanehori K."/>
            <person name="Takahashi-Fujii A."/>
            <person name="Hara H."/>
            <person name="Tanase T.-O."/>
            <person name="Nomura Y."/>
            <person name="Togiya S."/>
            <person name="Komai F."/>
            <person name="Hara R."/>
            <person name="Takeuchi K."/>
            <person name="Arita M."/>
            <person name="Imose N."/>
            <person name="Musashino K."/>
            <person name="Yuuki H."/>
            <person name="Oshima A."/>
            <person name="Sasaki N."/>
            <person name="Aotsuka S."/>
            <person name="Yoshikawa Y."/>
            <person name="Matsunawa H."/>
            <person name="Ichihara T."/>
            <person name="Shiohata N."/>
            <person name="Sano S."/>
            <person name="Moriya S."/>
            <person name="Momiyama H."/>
            <person name="Satoh N."/>
            <person name="Takami S."/>
            <person name="Terashima Y."/>
            <person name="Suzuki O."/>
            <person name="Nakagawa S."/>
            <person name="Senoh A."/>
            <person name="Mizoguchi H."/>
            <person name="Goto Y."/>
            <person name="Shimizu F."/>
            <person name="Wakebe H."/>
            <person name="Hishigaki H."/>
            <person name="Watanabe T."/>
            <person name="Sugiyama A."/>
            <person name="Takemoto M."/>
            <person name="Kawakami B."/>
            <person name="Yamazaki M."/>
            <person name="Watanabe K."/>
            <person name="Kumagai A."/>
            <person name="Itakura S."/>
            <person name="Fukuzumi Y."/>
            <person name="Fujimori Y."/>
            <person name="Komiyama M."/>
            <person name="Tashiro H."/>
            <person name="Tanigami A."/>
            <person name="Fujiwara T."/>
            <person name="Ono T."/>
            <person name="Yamada K."/>
            <person name="Fujii Y."/>
            <person name="Ozaki K."/>
            <person name="Hirao M."/>
            <person name="Ohmori Y."/>
            <person name="Kawabata A."/>
            <person name="Hikiji T."/>
            <person name="Kobatake N."/>
            <person name="Inagaki H."/>
            <person name="Ikema Y."/>
            <person name="Okamoto S."/>
            <person name="Okitani R."/>
            <person name="Kawakami T."/>
            <person name="Noguchi S."/>
            <person name="Itoh T."/>
            <person name="Shigeta K."/>
            <person name="Senba T."/>
            <person name="Matsumura K."/>
            <person name="Nakajima Y."/>
            <person name="Mizuno T."/>
            <person name="Morinaga M."/>
            <person name="Sasaki M."/>
            <person name="Togashi T."/>
            <person name="Oyama M."/>
            <person name="Hata H."/>
            <person name="Watanabe M."/>
            <person name="Komatsu T."/>
            <person name="Mizushima-Sugano J."/>
            <person name="Satoh T."/>
            <person name="Shirai Y."/>
            <person name="Takahashi Y."/>
            <person name="Nakagawa K."/>
            <person name="Okumura K."/>
            <person name="Nagase T."/>
            <person name="Nomura N."/>
            <person name="Kikuchi H."/>
            <person name="Masuho Y."/>
            <person name="Yamashita R."/>
            <person name="Nakai K."/>
            <person name="Yada T."/>
            <person name="Nakamura Y."/>
            <person name="Ohara O."/>
            <person name="Isogai T."/>
            <person name="Sugano S."/>
        </authorList>
    </citation>
    <scope>NUCLEOTIDE SEQUENCE [LARGE SCALE MRNA]</scope>
    <source>
        <tissue>Placenta</tissue>
    </source>
</reference>
<reference key="2">
    <citation type="journal article" date="2005" name="Nature">
        <title>Generation and annotation of the DNA sequences of human chromosomes 2 and 4.</title>
        <authorList>
            <person name="Hillier L.W."/>
            <person name="Graves T.A."/>
            <person name="Fulton R.S."/>
            <person name="Fulton L.A."/>
            <person name="Pepin K.H."/>
            <person name="Minx P."/>
            <person name="Wagner-McPherson C."/>
            <person name="Layman D."/>
            <person name="Wylie K."/>
            <person name="Sekhon M."/>
            <person name="Becker M.C."/>
            <person name="Fewell G.A."/>
            <person name="Delehaunty K.D."/>
            <person name="Miner T.L."/>
            <person name="Nash W.E."/>
            <person name="Kremitzki C."/>
            <person name="Oddy L."/>
            <person name="Du H."/>
            <person name="Sun H."/>
            <person name="Bradshaw-Cordum H."/>
            <person name="Ali J."/>
            <person name="Carter J."/>
            <person name="Cordes M."/>
            <person name="Harris A."/>
            <person name="Isak A."/>
            <person name="van Brunt A."/>
            <person name="Nguyen C."/>
            <person name="Du F."/>
            <person name="Courtney L."/>
            <person name="Kalicki J."/>
            <person name="Ozersky P."/>
            <person name="Abbott S."/>
            <person name="Armstrong J."/>
            <person name="Belter E.A."/>
            <person name="Caruso L."/>
            <person name="Cedroni M."/>
            <person name="Cotton M."/>
            <person name="Davidson T."/>
            <person name="Desai A."/>
            <person name="Elliott G."/>
            <person name="Erb T."/>
            <person name="Fronick C."/>
            <person name="Gaige T."/>
            <person name="Haakenson W."/>
            <person name="Haglund K."/>
            <person name="Holmes A."/>
            <person name="Harkins R."/>
            <person name="Kim K."/>
            <person name="Kruchowski S.S."/>
            <person name="Strong C.M."/>
            <person name="Grewal N."/>
            <person name="Goyea E."/>
            <person name="Hou S."/>
            <person name="Levy A."/>
            <person name="Martinka S."/>
            <person name="Mead K."/>
            <person name="McLellan M.D."/>
            <person name="Meyer R."/>
            <person name="Randall-Maher J."/>
            <person name="Tomlinson C."/>
            <person name="Dauphin-Kohlberg S."/>
            <person name="Kozlowicz-Reilly A."/>
            <person name="Shah N."/>
            <person name="Swearengen-Shahid S."/>
            <person name="Snider J."/>
            <person name="Strong J.T."/>
            <person name="Thompson J."/>
            <person name="Yoakum M."/>
            <person name="Leonard S."/>
            <person name="Pearman C."/>
            <person name="Trani L."/>
            <person name="Radionenko M."/>
            <person name="Waligorski J.E."/>
            <person name="Wang C."/>
            <person name="Rock S.M."/>
            <person name="Tin-Wollam A.-M."/>
            <person name="Maupin R."/>
            <person name="Latreille P."/>
            <person name="Wendl M.C."/>
            <person name="Yang S.-P."/>
            <person name="Pohl C."/>
            <person name="Wallis J.W."/>
            <person name="Spieth J."/>
            <person name="Bieri T.A."/>
            <person name="Berkowicz N."/>
            <person name="Nelson J.O."/>
            <person name="Osborne J."/>
            <person name="Ding L."/>
            <person name="Meyer R."/>
            <person name="Sabo A."/>
            <person name="Shotland Y."/>
            <person name="Sinha P."/>
            <person name="Wohldmann P.E."/>
            <person name="Cook L.L."/>
            <person name="Hickenbotham M.T."/>
            <person name="Eldred J."/>
            <person name="Williams D."/>
            <person name="Jones T.A."/>
            <person name="She X."/>
            <person name="Ciccarelli F.D."/>
            <person name="Izaurralde E."/>
            <person name="Taylor J."/>
            <person name="Schmutz J."/>
            <person name="Myers R.M."/>
            <person name="Cox D.R."/>
            <person name="Huang X."/>
            <person name="McPherson J.D."/>
            <person name="Mardis E.R."/>
            <person name="Clifton S.W."/>
            <person name="Warren W.C."/>
            <person name="Chinwalla A.T."/>
            <person name="Eddy S.R."/>
            <person name="Marra M.A."/>
            <person name="Ovcharenko I."/>
            <person name="Furey T.S."/>
            <person name="Miller W."/>
            <person name="Eichler E.E."/>
            <person name="Bork P."/>
            <person name="Suyama M."/>
            <person name="Torrents D."/>
            <person name="Waterston R.H."/>
            <person name="Wilson R.K."/>
        </authorList>
    </citation>
    <scope>NUCLEOTIDE SEQUENCE [LARGE SCALE GENOMIC DNA]</scope>
</reference>
<reference key="3">
    <citation type="journal article" date="2004" name="Genome Res.">
        <title>The status, quality, and expansion of the NIH full-length cDNA project: the Mammalian Gene Collection (MGC).</title>
        <authorList>
            <consortium name="The MGC Project Team"/>
        </authorList>
    </citation>
    <scope>NUCLEOTIDE SEQUENCE [LARGE SCALE MRNA]</scope>
    <source>
        <tissue>Placenta</tissue>
        <tissue>Uterus</tissue>
    </source>
</reference>
<reference key="4">
    <citation type="journal article" date="2007" name="Mol. Biol. Cell">
        <title>BLOC-1 is required for cargo-specific sorting from vacuolar early endosomes toward lysosome-related organelles.</title>
        <authorList>
            <person name="Setty S.R."/>
            <person name="Tenza D."/>
            <person name="Truschel S.T."/>
            <person name="Chou E."/>
            <person name="Sviderskaya E.V."/>
            <person name="Theos A.C."/>
            <person name="Lamoreux M.L."/>
            <person name="Di Pietro S.M."/>
            <person name="Starcevic M."/>
            <person name="Bennett D.C."/>
            <person name="Dell'Angelica E.C."/>
            <person name="Raposo G."/>
            <person name="Marks M.S."/>
        </authorList>
    </citation>
    <scope>FUNCTION</scope>
</reference>
<reference key="5">
    <citation type="journal article" date="2012" name="J. Biol. Chem.">
        <title>Assembly and architecture of biogenesis of lysosome-related organelles complex-1 (BLOC-1).</title>
        <authorList>
            <person name="Lee H.H."/>
            <person name="Nemecek D."/>
            <person name="Schindler C."/>
            <person name="Smith W.J."/>
            <person name="Ghirlando R."/>
            <person name="Steven A.C."/>
            <person name="Bonifacino J.S."/>
            <person name="Hurley J.H."/>
        </authorList>
    </citation>
    <scope>IDENTIFICATION IN THE BLOC-1 COMPLEX</scope>
    <scope>COMPOSITION OF THE BLOC-1 COMPLEX</scope>
</reference>
<reference key="6">
    <citation type="journal article" date="2013" name="J. Proteome Res.">
        <title>Toward a comprehensive characterization of a human cancer cell phosphoproteome.</title>
        <authorList>
            <person name="Zhou H."/>
            <person name="Di Palma S."/>
            <person name="Preisinger C."/>
            <person name="Peng M."/>
            <person name="Polat A.N."/>
            <person name="Heck A.J."/>
            <person name="Mohammed S."/>
        </authorList>
    </citation>
    <scope>PHOSPHORYLATION [LARGE SCALE ANALYSIS] AT THR-165</scope>
    <scope>IDENTIFICATION BY MASS SPECTROMETRY [LARGE SCALE ANALYSIS]</scope>
    <source>
        <tissue>Cervix carcinoma</tissue>
        <tissue>Erythroleukemia</tissue>
    </source>
</reference>
<proteinExistence type="evidence at protein level"/>
<dbReference type="EMBL" id="AK002092">
    <property type="protein sequence ID" value="BAA92080.1"/>
    <property type="molecule type" value="mRNA"/>
</dbReference>
<dbReference type="EMBL" id="AC093323">
    <property type="status" value="NOT_ANNOTATED_CDS"/>
    <property type="molecule type" value="Genomic_DNA"/>
</dbReference>
<dbReference type="EMBL" id="BC067815">
    <property type="protein sequence ID" value="AAH67815.1"/>
    <property type="molecule type" value="mRNA"/>
</dbReference>
<dbReference type="EMBL" id="BC001818">
    <property type="status" value="NOT_ANNOTATED_CDS"/>
    <property type="molecule type" value="mRNA"/>
</dbReference>
<dbReference type="EMBL" id="BC009890">
    <property type="status" value="NOT_ANNOTATED_CDS"/>
    <property type="molecule type" value="mRNA"/>
</dbReference>
<dbReference type="CCDS" id="CCDS3393.1"/>
<dbReference type="RefSeq" id="NP_060836.1">
    <property type="nucleotide sequence ID" value="NM_018366.3"/>
</dbReference>
<dbReference type="SMR" id="Q9NUP1"/>
<dbReference type="BioGRID" id="120611">
    <property type="interactions" value="18"/>
</dbReference>
<dbReference type="ComplexPortal" id="CPX-1910">
    <property type="entry name" value="BLOC-1 complex"/>
</dbReference>
<dbReference type="CORUM" id="Q9NUP1"/>
<dbReference type="FunCoup" id="Q9NUP1">
    <property type="interactions" value="468"/>
</dbReference>
<dbReference type="IntAct" id="Q9NUP1">
    <property type="interactions" value="16"/>
</dbReference>
<dbReference type="MINT" id="Q9NUP1"/>
<dbReference type="STRING" id="9606.ENSP00000318128"/>
<dbReference type="iPTMnet" id="Q9NUP1"/>
<dbReference type="PhosphoSitePlus" id="Q9NUP1"/>
<dbReference type="BioMuta" id="BLOC1S4"/>
<dbReference type="DMDM" id="34395560"/>
<dbReference type="jPOST" id="Q9NUP1"/>
<dbReference type="MassIVE" id="Q9NUP1"/>
<dbReference type="PaxDb" id="9606-ENSP00000318128"/>
<dbReference type="PeptideAtlas" id="Q9NUP1"/>
<dbReference type="ProteomicsDB" id="82702"/>
<dbReference type="Pumba" id="Q9NUP1"/>
<dbReference type="Antibodypedia" id="22679">
    <property type="antibodies" value="63 antibodies from 18 providers"/>
</dbReference>
<dbReference type="DNASU" id="55330"/>
<dbReference type="Ensembl" id="ENST00000320776.5">
    <property type="protein sequence ID" value="ENSP00000318128.3"/>
    <property type="gene ID" value="ENSG00000186222.5"/>
</dbReference>
<dbReference type="GeneID" id="55330"/>
<dbReference type="KEGG" id="hsa:55330"/>
<dbReference type="MANE-Select" id="ENST00000320776.5">
    <property type="protein sequence ID" value="ENSP00000318128.3"/>
    <property type="RefSeq nucleotide sequence ID" value="NM_018366.3"/>
    <property type="RefSeq protein sequence ID" value="NP_060836.1"/>
</dbReference>
<dbReference type="UCSC" id="uc003gjp.2">
    <property type="organism name" value="human"/>
</dbReference>
<dbReference type="AGR" id="HGNC:24206"/>
<dbReference type="CTD" id="55330"/>
<dbReference type="DisGeNET" id="55330"/>
<dbReference type="GeneCards" id="BLOC1S4"/>
<dbReference type="HGNC" id="HGNC:24206">
    <property type="gene designation" value="BLOC1S4"/>
</dbReference>
<dbReference type="HPA" id="ENSG00000186222">
    <property type="expression patterns" value="Low tissue specificity"/>
</dbReference>
<dbReference type="MIM" id="605695">
    <property type="type" value="gene"/>
</dbReference>
<dbReference type="neXtProt" id="NX_Q9NUP1"/>
<dbReference type="OpenTargets" id="ENSG00000186222"/>
<dbReference type="PharmGKB" id="PA142672088"/>
<dbReference type="VEuPathDB" id="HostDB:ENSG00000186222"/>
<dbReference type="eggNOG" id="ENOG502S1N9">
    <property type="taxonomic scope" value="Eukaryota"/>
</dbReference>
<dbReference type="GeneTree" id="ENSGT00390000006790"/>
<dbReference type="HOGENOM" id="CLU_096507_3_0_1"/>
<dbReference type="InParanoid" id="Q9NUP1"/>
<dbReference type="OMA" id="MLDMIRG"/>
<dbReference type="OrthoDB" id="2372305at2759"/>
<dbReference type="PAN-GO" id="Q9NUP1">
    <property type="GO annotations" value="1 GO annotation based on evolutionary models"/>
</dbReference>
<dbReference type="PhylomeDB" id="Q9NUP1"/>
<dbReference type="TreeFam" id="TF326629"/>
<dbReference type="PathwayCommons" id="Q9NUP1"/>
<dbReference type="Reactome" id="R-HSA-432722">
    <property type="pathway name" value="Golgi Associated Vesicle Biogenesis"/>
</dbReference>
<dbReference type="SignaLink" id="Q9NUP1"/>
<dbReference type="SIGNOR" id="Q9NUP1"/>
<dbReference type="BioGRID-ORCS" id="55330">
    <property type="hits" value="6 hits in 1147 CRISPR screens"/>
</dbReference>
<dbReference type="ChiTaRS" id="BLOC1S4">
    <property type="organism name" value="human"/>
</dbReference>
<dbReference type="GeneWiki" id="CNO_(gene)"/>
<dbReference type="GenomeRNAi" id="55330"/>
<dbReference type="Pharos" id="Q9NUP1">
    <property type="development level" value="Tdark"/>
</dbReference>
<dbReference type="PRO" id="PR:Q9NUP1"/>
<dbReference type="Proteomes" id="UP000005640">
    <property type="component" value="Chromosome 4"/>
</dbReference>
<dbReference type="RNAct" id="Q9NUP1">
    <property type="molecule type" value="protein"/>
</dbReference>
<dbReference type="Bgee" id="ENSG00000186222">
    <property type="expression patterns" value="Expressed in ileal mucosa and 160 other cell types or tissues"/>
</dbReference>
<dbReference type="GO" id="GO:1904115">
    <property type="term" value="C:axon cytoplasm"/>
    <property type="evidence" value="ECO:0007669"/>
    <property type="project" value="GOC"/>
</dbReference>
<dbReference type="GO" id="GO:0031083">
    <property type="term" value="C:BLOC-1 complex"/>
    <property type="evidence" value="ECO:0000314"/>
    <property type="project" value="UniProtKB"/>
</dbReference>
<dbReference type="GO" id="GO:0005737">
    <property type="term" value="C:cytoplasm"/>
    <property type="evidence" value="ECO:0000250"/>
    <property type="project" value="UniProtKB"/>
</dbReference>
<dbReference type="GO" id="GO:0005829">
    <property type="term" value="C:cytosol"/>
    <property type="evidence" value="ECO:0000304"/>
    <property type="project" value="Reactome"/>
</dbReference>
<dbReference type="GO" id="GO:0008089">
    <property type="term" value="P:anterograde axonal transport"/>
    <property type="evidence" value="ECO:0000250"/>
    <property type="project" value="UniProtKB"/>
</dbReference>
<dbReference type="GO" id="GO:0048490">
    <property type="term" value="P:anterograde synaptic vesicle transport"/>
    <property type="evidence" value="ECO:0000250"/>
    <property type="project" value="UniProtKB"/>
</dbReference>
<dbReference type="GO" id="GO:0032438">
    <property type="term" value="P:melanosome organization"/>
    <property type="evidence" value="ECO:0000303"/>
    <property type="project" value="UniProtKB"/>
</dbReference>
<dbReference type="GO" id="GO:0050885">
    <property type="term" value="P:neuromuscular process controlling balance"/>
    <property type="evidence" value="ECO:0007669"/>
    <property type="project" value="Ensembl"/>
</dbReference>
<dbReference type="GO" id="GO:0031175">
    <property type="term" value="P:neuron projection development"/>
    <property type="evidence" value="ECO:0000250"/>
    <property type="project" value="UniProtKB"/>
</dbReference>
<dbReference type="GO" id="GO:0070527">
    <property type="term" value="P:platelet aggregation"/>
    <property type="evidence" value="ECO:0007669"/>
    <property type="project" value="Ensembl"/>
</dbReference>
<dbReference type="InterPro" id="IPR024857">
    <property type="entry name" value="Cappuccino"/>
</dbReference>
<dbReference type="PANTHER" id="PTHR16230:SF4">
    <property type="entry name" value="BIOGENESIS OF LYSOSOME-RELATED ORGANELLES COMPLEX 1 SUBUNIT 4"/>
    <property type="match status" value="1"/>
</dbReference>
<dbReference type="PANTHER" id="PTHR16230">
    <property type="entry name" value="CAPPUCCINO"/>
    <property type="match status" value="1"/>
</dbReference>
<organism>
    <name type="scientific">Homo sapiens</name>
    <name type="common">Human</name>
    <dbReference type="NCBI Taxonomy" id="9606"/>
    <lineage>
        <taxon>Eukaryota</taxon>
        <taxon>Metazoa</taxon>
        <taxon>Chordata</taxon>
        <taxon>Craniata</taxon>
        <taxon>Vertebrata</taxon>
        <taxon>Euteleostomi</taxon>
        <taxon>Mammalia</taxon>
        <taxon>Eutheria</taxon>
        <taxon>Euarchontoglires</taxon>
        <taxon>Primates</taxon>
        <taxon>Haplorrhini</taxon>
        <taxon>Catarrhini</taxon>
        <taxon>Hominidae</taxon>
        <taxon>Homo</taxon>
    </lineage>
</organism>
<keyword id="KW-0175">Coiled coil</keyword>
<keyword id="KW-0963">Cytoplasm</keyword>
<keyword id="KW-0597">Phosphoprotein</keyword>
<keyword id="KW-1267">Proteomics identification</keyword>
<keyword id="KW-1185">Reference proteome</keyword>
<accession>Q9NUP1</accession>
<accession>Q6NVY6</accession>
<accession>Q96G84</accession>
<evidence type="ECO:0000250" key="1"/>
<evidence type="ECO:0000255" key="2"/>
<evidence type="ECO:0000256" key="3">
    <source>
        <dbReference type="SAM" id="MobiDB-lite"/>
    </source>
</evidence>
<evidence type="ECO:0000269" key="4">
    <source>
    </source>
</evidence>
<evidence type="ECO:0000269" key="5">
    <source>
    </source>
</evidence>
<evidence type="ECO:0000305" key="6"/>
<evidence type="ECO:0007744" key="7">
    <source>
    </source>
</evidence>
<gene>
    <name type="primary">BLOC1S4</name>
    <name type="synonym">CNO</name>
</gene>
<protein>
    <recommendedName>
        <fullName>Biogenesis of lysosome-related organelles complex 1 subunit 4</fullName>
        <shortName>BLOC-1 subunit 4</shortName>
    </recommendedName>
    <alternativeName>
        <fullName>Protein cappuccino homolog</fullName>
    </alternativeName>
</protein>
<sequence length="217" mass="23351">MEGSFSDGGALPEGLAEEAEPQGAAWSGDSGTVSQSHSSASGPWEDEGAEDGAPGRDLPLLRRAAAGYAACLLPGAGARPEVEALDASLEDLLTRVDEFVGMLDMLRGDSSHVVSEGVPRIHAKAAEMRRIYSRIDRLEAFVRMVGGRVARMEEQVTKAEAELGTFPRAFKKLLHTMNVPSLFSKSAPSRPQQAGYEAPVLFRTEDYFPCCSERPQL</sequence>